<feature type="chain" id="PRO_1000149546" description="UPF0223 protein SEQ_1039">
    <location>
        <begin position="1"/>
        <end position="92"/>
    </location>
</feature>
<gene>
    <name type="ordered locus">SEQ_1039</name>
</gene>
<sequence>MSDHYHYPLDVSWSTEEITSVLHFLNQVELAYEAKVGAEELLKSYAAYKEIVRSKSQEKQIDREFQQASGYSTYQAVKKAREIEKGFFSLGR</sequence>
<protein>
    <recommendedName>
        <fullName evidence="1">UPF0223 protein SEQ_1039</fullName>
    </recommendedName>
</protein>
<accession>C0M990</accession>
<dbReference type="EMBL" id="FM204883">
    <property type="protein sequence ID" value="CAW93648.1"/>
    <property type="molecule type" value="Genomic_DNA"/>
</dbReference>
<dbReference type="RefSeq" id="WP_012678025.1">
    <property type="nucleotide sequence ID" value="NC_012471.1"/>
</dbReference>
<dbReference type="SMR" id="C0M990"/>
<dbReference type="KEGG" id="seu:SEQ_1039"/>
<dbReference type="HOGENOM" id="CLU_166693_0_0_9"/>
<dbReference type="OrthoDB" id="1649074at2"/>
<dbReference type="Proteomes" id="UP000001365">
    <property type="component" value="Chromosome"/>
</dbReference>
<dbReference type="Gene3D" id="1.10.220.80">
    <property type="entry name" value="BH2638-like"/>
    <property type="match status" value="1"/>
</dbReference>
<dbReference type="HAMAP" id="MF_01041">
    <property type="entry name" value="UPF0223"/>
    <property type="match status" value="1"/>
</dbReference>
<dbReference type="InterPro" id="IPR023324">
    <property type="entry name" value="BH2638-like_sf"/>
</dbReference>
<dbReference type="InterPro" id="IPR007920">
    <property type="entry name" value="UPF0223"/>
</dbReference>
<dbReference type="NCBIfam" id="NF003353">
    <property type="entry name" value="PRK04387.1"/>
    <property type="match status" value="1"/>
</dbReference>
<dbReference type="Pfam" id="PF05256">
    <property type="entry name" value="UPF0223"/>
    <property type="match status" value="1"/>
</dbReference>
<dbReference type="PIRSF" id="PIRSF037260">
    <property type="entry name" value="UPF0223"/>
    <property type="match status" value="1"/>
</dbReference>
<dbReference type="SUPFAM" id="SSF158504">
    <property type="entry name" value="BH2638-like"/>
    <property type="match status" value="1"/>
</dbReference>
<evidence type="ECO:0000255" key="1">
    <source>
        <dbReference type="HAMAP-Rule" id="MF_01041"/>
    </source>
</evidence>
<organism>
    <name type="scientific">Streptococcus equi subsp. equi (strain 4047)</name>
    <dbReference type="NCBI Taxonomy" id="553482"/>
    <lineage>
        <taxon>Bacteria</taxon>
        <taxon>Bacillati</taxon>
        <taxon>Bacillota</taxon>
        <taxon>Bacilli</taxon>
        <taxon>Lactobacillales</taxon>
        <taxon>Streptococcaceae</taxon>
        <taxon>Streptococcus</taxon>
    </lineage>
</organism>
<reference key="1">
    <citation type="journal article" date="2009" name="PLoS Pathog.">
        <title>Genomic evidence for the evolution of Streptococcus equi: host restriction, increased virulence, and genetic exchange with human pathogens.</title>
        <authorList>
            <person name="Holden M.T.G."/>
            <person name="Heather Z."/>
            <person name="Paillot R."/>
            <person name="Steward K.F."/>
            <person name="Webb K."/>
            <person name="Ainslie F."/>
            <person name="Jourdan T."/>
            <person name="Bason N.C."/>
            <person name="Holroyd N.E."/>
            <person name="Mungall K."/>
            <person name="Quail M.A."/>
            <person name="Sanders M."/>
            <person name="Simmonds M."/>
            <person name="Willey D."/>
            <person name="Brooks K."/>
            <person name="Aanensen D.M."/>
            <person name="Spratt B.G."/>
            <person name="Jolley K.A."/>
            <person name="Maiden M.C.J."/>
            <person name="Kehoe M."/>
            <person name="Chanter N."/>
            <person name="Bentley S.D."/>
            <person name="Robinson C."/>
            <person name="Maskell D.J."/>
            <person name="Parkhill J."/>
            <person name="Waller A.S."/>
        </authorList>
    </citation>
    <scope>NUCLEOTIDE SEQUENCE [LARGE SCALE GENOMIC DNA]</scope>
    <source>
        <strain>4047</strain>
    </source>
</reference>
<name>Y1039_STRE4</name>
<proteinExistence type="inferred from homology"/>
<comment type="similarity">
    <text evidence="1">Belongs to the UPF0223 family.</text>
</comment>